<dbReference type="EMBL" id="AF111179">
    <property type="protein sequence ID" value="AAD21035.1"/>
    <property type="molecule type" value="mRNA"/>
</dbReference>
<dbReference type="EMBL" id="AF111180">
    <property type="protein sequence ID" value="AAD21036.1"/>
    <property type="molecule type" value="mRNA"/>
</dbReference>
<dbReference type="EMBL" id="AF111181">
    <property type="protein sequence ID" value="AAD21037.1"/>
    <property type="molecule type" value="mRNA"/>
</dbReference>
<dbReference type="RefSeq" id="NP_062248.1">
    <property type="nucleotide sequence ID" value="NM_019375.1"/>
</dbReference>
<dbReference type="SMR" id="Q9WU34"/>
<dbReference type="BioGRID" id="248552">
    <property type="interactions" value="2"/>
</dbReference>
<dbReference type="CORUM" id="Q9WU34"/>
<dbReference type="FunCoup" id="Q9WU34">
    <property type="interactions" value="1151"/>
</dbReference>
<dbReference type="IntAct" id="Q9WU34">
    <property type="interactions" value="4"/>
</dbReference>
<dbReference type="MINT" id="Q9WU34"/>
<dbReference type="STRING" id="10116.ENSRNOP00000010491"/>
<dbReference type="iPTMnet" id="Q9WU34"/>
<dbReference type="PhosphoSitePlus" id="Q9WU34"/>
<dbReference type="PaxDb" id="10116-ENSRNOP00000010491"/>
<dbReference type="GeneID" id="56003"/>
<dbReference type="KEGG" id="rno:56003"/>
<dbReference type="AGR" id="RGD:621745"/>
<dbReference type="CTD" id="55964"/>
<dbReference type="RGD" id="621745">
    <property type="gene designation" value="Septin3"/>
</dbReference>
<dbReference type="eggNOG" id="KOG1547">
    <property type="taxonomic scope" value="Eukaryota"/>
</dbReference>
<dbReference type="InParanoid" id="Q9WU34"/>
<dbReference type="PhylomeDB" id="Q9WU34"/>
<dbReference type="PRO" id="PR:Q9WU34"/>
<dbReference type="Proteomes" id="UP000002494">
    <property type="component" value="Unplaced"/>
</dbReference>
<dbReference type="GO" id="GO:0032153">
    <property type="term" value="C:cell division site"/>
    <property type="evidence" value="ECO:0000318"/>
    <property type="project" value="GO_Central"/>
</dbReference>
<dbReference type="GO" id="GO:0015630">
    <property type="term" value="C:microtubule cytoskeleton"/>
    <property type="evidence" value="ECO:0000318"/>
    <property type="project" value="GO_Central"/>
</dbReference>
<dbReference type="GO" id="GO:0098793">
    <property type="term" value="C:presynapse"/>
    <property type="evidence" value="ECO:0000314"/>
    <property type="project" value="SynGO"/>
</dbReference>
<dbReference type="GO" id="GO:0042734">
    <property type="term" value="C:presynaptic membrane"/>
    <property type="evidence" value="ECO:0000314"/>
    <property type="project" value="RGD"/>
</dbReference>
<dbReference type="GO" id="GO:0031105">
    <property type="term" value="C:septin complex"/>
    <property type="evidence" value="ECO:0000250"/>
    <property type="project" value="UniProtKB"/>
</dbReference>
<dbReference type="GO" id="GO:0005940">
    <property type="term" value="C:septin ring"/>
    <property type="evidence" value="ECO:0000318"/>
    <property type="project" value="GO_Central"/>
</dbReference>
<dbReference type="GO" id="GO:0005525">
    <property type="term" value="F:GTP binding"/>
    <property type="evidence" value="ECO:0000314"/>
    <property type="project" value="RGD"/>
</dbReference>
<dbReference type="GO" id="GO:0003924">
    <property type="term" value="F:GTPase activity"/>
    <property type="evidence" value="ECO:0000318"/>
    <property type="project" value="GO_Central"/>
</dbReference>
<dbReference type="GO" id="GO:0042802">
    <property type="term" value="F:identical protein binding"/>
    <property type="evidence" value="ECO:0000266"/>
    <property type="project" value="RGD"/>
</dbReference>
<dbReference type="GO" id="GO:0060090">
    <property type="term" value="F:molecular adaptor activity"/>
    <property type="evidence" value="ECO:0000318"/>
    <property type="project" value="GO_Central"/>
</dbReference>
<dbReference type="GO" id="GO:0061640">
    <property type="term" value="P:cytoskeleton-dependent cytokinesis"/>
    <property type="evidence" value="ECO:0000318"/>
    <property type="project" value="GO_Central"/>
</dbReference>
<dbReference type="GO" id="GO:0140247">
    <property type="term" value="P:protein catabolic process at presynapse"/>
    <property type="evidence" value="ECO:0000266"/>
    <property type="project" value="RGD"/>
</dbReference>
<dbReference type="GO" id="GO:0008104">
    <property type="term" value="P:protein localization"/>
    <property type="evidence" value="ECO:0000318"/>
    <property type="project" value="GO_Central"/>
</dbReference>
<dbReference type="CDD" id="cd01850">
    <property type="entry name" value="CDC_Septin"/>
    <property type="match status" value="1"/>
</dbReference>
<dbReference type="FunFam" id="3.40.50.300:FF:000387">
    <property type="entry name" value="neuronal-specific septin-3 isoform X1"/>
    <property type="match status" value="1"/>
</dbReference>
<dbReference type="Gene3D" id="3.40.50.300">
    <property type="entry name" value="P-loop containing nucleotide triphosphate hydrolases"/>
    <property type="match status" value="1"/>
</dbReference>
<dbReference type="InterPro" id="IPR030379">
    <property type="entry name" value="G_SEPTIN_dom"/>
</dbReference>
<dbReference type="InterPro" id="IPR027417">
    <property type="entry name" value="P-loop_NTPase"/>
</dbReference>
<dbReference type="InterPro" id="IPR016491">
    <property type="entry name" value="Septin"/>
</dbReference>
<dbReference type="InterPro" id="IPR008114">
    <property type="entry name" value="Septin3"/>
</dbReference>
<dbReference type="PANTHER" id="PTHR18884">
    <property type="entry name" value="SEPTIN"/>
    <property type="match status" value="1"/>
</dbReference>
<dbReference type="Pfam" id="PF00735">
    <property type="entry name" value="Septin"/>
    <property type="match status" value="1"/>
</dbReference>
<dbReference type="PIRSF" id="PIRSF006698">
    <property type="entry name" value="Septin"/>
    <property type="match status" value="1"/>
</dbReference>
<dbReference type="PRINTS" id="PR01741">
    <property type="entry name" value="SEPTIN3"/>
</dbReference>
<dbReference type="SUPFAM" id="SSF52540">
    <property type="entry name" value="P-loop containing nucleoside triphosphate hydrolases"/>
    <property type="match status" value="1"/>
</dbReference>
<dbReference type="PROSITE" id="PS51719">
    <property type="entry name" value="G_SEPTIN"/>
    <property type="match status" value="1"/>
</dbReference>
<organism>
    <name type="scientific">Rattus norvegicus</name>
    <name type="common">Rat</name>
    <dbReference type="NCBI Taxonomy" id="10116"/>
    <lineage>
        <taxon>Eukaryota</taxon>
        <taxon>Metazoa</taxon>
        <taxon>Chordata</taxon>
        <taxon>Craniata</taxon>
        <taxon>Vertebrata</taxon>
        <taxon>Euteleostomi</taxon>
        <taxon>Mammalia</taxon>
        <taxon>Eutheria</taxon>
        <taxon>Euarchontoglires</taxon>
        <taxon>Glires</taxon>
        <taxon>Rodentia</taxon>
        <taxon>Myomorpha</taxon>
        <taxon>Muroidea</taxon>
        <taxon>Muridae</taxon>
        <taxon>Murinae</taxon>
        <taxon>Rattus</taxon>
    </lineage>
</organism>
<protein>
    <recommendedName>
        <fullName>Neuronal-specific septin-3</fullName>
    </recommendedName>
    <alternativeName>
        <fullName>G-septin</fullName>
    </alternativeName>
    <alternativeName>
        <fullName>P40</fullName>
    </alternativeName>
</protein>
<reference key="1">
    <citation type="journal article" date="2000" name="J. Biol. Chem.">
        <title>Phosphorylation of a new brain-specific septin, G-septin, by cGMP-dependent protein kinase.</title>
        <authorList>
            <person name="Xue J."/>
            <person name="Wang X."/>
            <person name="Malladi C.S."/>
            <person name="Kinoshita M."/>
            <person name="Milburn P.J."/>
            <person name="Lengyel I."/>
            <person name="Rostas J.A."/>
            <person name="Robinson P.J."/>
        </authorList>
    </citation>
    <scope>NUCLEOTIDE SEQUENCE [MRNA] (ISOFORMS 1; 2 AND 3)</scope>
    <scope>PROTEIN SEQUENCE OF 60-74 AND 314-325</scope>
    <scope>PHOSPHORYLATION</scope>
    <scope>TISSUE SPECIFICITY</scope>
    <source>
        <strain>Sprague-Dawley</strain>
        <tissue>Brain</tissue>
    </source>
</reference>
<reference key="2">
    <citation type="submission" date="2007-04" db="UniProtKB">
        <authorList>
            <person name="Lubec G."/>
            <person name="Diao W."/>
        </authorList>
    </citation>
    <scope>PROTEIN SEQUENCE OF 58-74; 227-239 AND 314-325</scope>
    <scope>IDENTIFICATION BY MASS SPECTROMETRY</scope>
    <source>
        <strain>Sprague-Dawley</strain>
        <tissue>Hippocampus</tissue>
    </source>
</reference>
<reference key="3">
    <citation type="journal article" date="2004" name="Biochem. J.">
        <title>Phosphorylation of septin 3 on Ser-91 by cGMP-dependent protein kinase-I in nerve terminals.</title>
        <authorList>
            <person name="Xue J."/>
            <person name="Milburn P.J."/>
            <person name="Hanna B.T."/>
            <person name="Graham M.E."/>
            <person name="Rostas J.A."/>
            <person name="Robinson P.J."/>
        </authorList>
    </citation>
    <scope>PHOSPHORYLATION AT SER-91</scope>
    <scope>MUTAGENESIS OF SER-91 AND SER-92</scope>
</reference>
<reference key="4">
    <citation type="journal article" date="2004" name="J. Neurochem.">
        <title>Septin 3 (G-septin) is a developmentally regulated phosphoprotein enriched in presynaptic nerve terminals.</title>
        <authorList>
            <person name="Xue J."/>
            <person name="Tsang C.W."/>
            <person name="Gai W.-P."/>
            <person name="Malladi C.S."/>
            <person name="Trimble W.S."/>
            <person name="Rostas J.A.P."/>
            <person name="Robinson P.J."/>
        </authorList>
    </citation>
    <scope>SUBCELLULAR LOCATION</scope>
    <scope>TISSUE SPECIFICITY</scope>
    <scope>DEVELOPMENTAL STAGE</scope>
</reference>
<accession>Q9WU34</accession>
<accession>Q9R245</accession>
<accession>Q9WU35</accession>
<comment type="function">
    <text evidence="1 9">Filament-forming cytoskeletal GTPase (By similarity). May play a role in cytokinesis (Potential).</text>
</comment>
<comment type="subunit">
    <text evidence="1">Septins polymerize into heterooligomeric protein complexes that form filaments, and can associate with cellular membranes, actin filaments and microtubules. GTPase activity is required for filament formation (By similarity).</text>
</comment>
<comment type="subcellular location">
    <subcellularLocation>
        <location evidence="7">Cytoplasm</location>
    </subcellularLocation>
    <subcellularLocation>
        <location evidence="1">Cytoplasm</location>
        <location evidence="1">Cytoskeleton</location>
    </subcellularLocation>
    <subcellularLocation>
        <location evidence="7">Synapse</location>
    </subcellularLocation>
    <text>In cultured hippocampal neurons, predominantly localized to presynaptic terminals.</text>
</comment>
<comment type="alternative products">
    <event type="alternative splicing"/>
    <isoform>
        <id>Q9WU34-1</id>
        <name>1</name>
        <name>G-septin-alpha</name>
        <sequence type="displayed"/>
    </isoform>
    <isoform>
        <id>Q9WU34-2</id>
        <name>2</name>
        <name>G-septin-beta</name>
        <sequence type="described" ref="VSP_025401 VSP_025404"/>
    </isoform>
    <isoform>
        <id>Q9WU34-3</id>
        <name>3</name>
        <name>G-septin-gamma</name>
        <sequence type="described" ref="VSP_025402 VSP_025403"/>
    </isoform>
</comment>
<comment type="tissue specificity">
    <text evidence="5 7">Brain-specific, with highest expression in the hippocampal CA3 region (at protein level).</text>
</comment>
<comment type="developmental stage">
    <text evidence="7">First expressed in the embryonic brain from 18 dpc. Levels increase during brain development until P7 and remain constant until P35. Further increase in adult brain (at protein level).</text>
</comment>
<comment type="PTM">
    <text evidence="5 6">Phosphorylated by PKG on serine residues. Phosphorylated by PKG on Ser-91.</text>
</comment>
<comment type="similarity">
    <text evidence="3">Belongs to the TRAFAC class TrmE-Era-EngA-EngB-Septin-like GTPase superfamily. Septin GTPase family.</text>
</comment>
<sequence length="358" mass="40598">MSKGLPEARTDTAMSELVPEPRPKPAVPMKPVSINSNLLGCIGIDTIIEQMRKKTMKTGFDFNIMVVGQSGLGKSTLVNTLFKSQVSRKASSWNREEKIPKTVEIKAIGHVIEEGGVKMKLTVIDTPGFGDQINNENCWEPIEKYINEQYEKFLKEEVNIARKKRIPDTRVHCCLYFISPTGHSLRPLDLEFMKHLSKVVNVIPVIAKADTMTLEEKSEFKQRVRKELEVNGIEFYPQKEFDEDLEDKTENDKIRQESMPFAVVGSDKEYQVNGKRVLGRKTPWGIIEVENLNHCEFALLRDFVIRTHLQDLKEVTHNIHYETYRAKRLNDNGGLPPGEGLLGTVLPPVPATPCPTAE</sequence>
<feature type="chain" id="PRO_0000287229" description="Neuronal-specific septin-3">
    <location>
        <begin position="1"/>
        <end position="358"/>
    </location>
</feature>
<feature type="domain" description="Septin-type G" evidence="3">
    <location>
        <begin position="58"/>
        <end position="331"/>
    </location>
</feature>
<feature type="region of interest" description="Disordered" evidence="4">
    <location>
        <begin position="1"/>
        <end position="29"/>
    </location>
</feature>
<feature type="region of interest" description="G1 motif" evidence="3">
    <location>
        <begin position="68"/>
        <end position="75"/>
    </location>
</feature>
<feature type="region of interest" description="G3 motif" evidence="3">
    <location>
        <begin position="125"/>
        <end position="128"/>
    </location>
</feature>
<feature type="region of interest" description="G4 motif" evidence="3">
    <location>
        <begin position="207"/>
        <end position="210"/>
    </location>
</feature>
<feature type="compositionally biased region" description="Basic and acidic residues" evidence="4">
    <location>
        <begin position="1"/>
        <end position="10"/>
    </location>
</feature>
<feature type="binding site" evidence="2">
    <location>
        <begin position="68"/>
        <end position="75"/>
    </location>
    <ligand>
        <name>GTP</name>
        <dbReference type="ChEBI" id="CHEBI:37565"/>
    </ligand>
</feature>
<feature type="binding site" evidence="2">
    <location>
        <position position="102"/>
    </location>
    <ligand>
        <name>GTP</name>
        <dbReference type="ChEBI" id="CHEBI:37565"/>
    </ligand>
</feature>
<feature type="binding site" evidence="2">
    <location>
        <begin position="208"/>
        <end position="216"/>
    </location>
    <ligand>
        <name>GTP</name>
        <dbReference type="ChEBI" id="CHEBI:37565"/>
    </ligand>
</feature>
<feature type="binding site" evidence="2">
    <location>
        <position position="265"/>
    </location>
    <ligand>
        <name>GTP</name>
        <dbReference type="ChEBI" id="CHEBI:37565"/>
    </ligand>
</feature>
<feature type="binding site" evidence="2">
    <location>
        <position position="280"/>
    </location>
    <ligand>
        <name>GTP</name>
        <dbReference type="ChEBI" id="CHEBI:37565"/>
    </ligand>
</feature>
<feature type="modified residue" description="Phosphoserine" evidence="6">
    <location>
        <position position="91"/>
    </location>
</feature>
<feature type="splice variant" id="VSP_025401" description="In isoform 2." evidence="8">
    <original>MSKGLPEARTDTAMSELVPEPRPKPAVPMKPVSINSNLLGCIGIDTIIEQMRKKTMKTGFDFNIMVV</original>
    <variation>MESNCHFPRPLSYLPKRHQFLPDAHSSSSNKAWPGPQLWSSISSQEGSAAQEADVGLSPFLCLPFCAA</variation>
    <location>
        <begin position="1"/>
        <end position="67"/>
    </location>
</feature>
<feature type="splice variant" id="VSP_025402" description="In isoform 3." evidence="8">
    <original>LLR</original>
    <variation>PRA</variation>
    <location>
        <begin position="299"/>
        <end position="301"/>
    </location>
</feature>
<feature type="splice variant" id="VSP_025403" description="In isoform 3." evidence="8">
    <location>
        <begin position="302"/>
        <end position="358"/>
    </location>
</feature>
<feature type="splice variant" id="VSP_025404" description="In isoform 2." evidence="8">
    <original>GEGLLGTVLPPVPATPCPTAE</original>
    <variation>VSVDTEESH</variation>
    <location>
        <begin position="338"/>
        <end position="358"/>
    </location>
</feature>
<feature type="mutagenesis site" description="Abolishes phosphorylation by PKG." evidence="6">
    <original>S</original>
    <variation>A</variation>
    <location>
        <position position="91"/>
    </location>
</feature>
<feature type="mutagenesis site" description="Increases phosphorylation by PKG." evidence="6">
    <original>S</original>
    <variation>A</variation>
    <location>
        <position position="92"/>
    </location>
</feature>
<feature type="sequence conflict" description="In Ref. 1; AAD21037." evidence="9" ref="1">
    <original>C</original>
    <variation>Y</variation>
    <location>
        <position position="41"/>
    </location>
</feature>
<feature type="sequence conflict" description="In Ref. 1; AAD21035." evidence="9" ref="1">
    <original>V</original>
    <variation>I</variation>
    <location>
        <position position="117"/>
    </location>
</feature>
<proteinExistence type="evidence at protein level"/>
<gene>
    <name evidence="2" type="primary">Septin3</name>
    <name evidence="10" type="synonym">Sept3</name>
</gene>
<evidence type="ECO:0000250" key="1"/>
<evidence type="ECO:0000250" key="2">
    <source>
        <dbReference type="UniProtKB" id="Q9UH03"/>
    </source>
</evidence>
<evidence type="ECO:0000255" key="3">
    <source>
        <dbReference type="PROSITE-ProRule" id="PRU01056"/>
    </source>
</evidence>
<evidence type="ECO:0000256" key="4">
    <source>
        <dbReference type="SAM" id="MobiDB-lite"/>
    </source>
</evidence>
<evidence type="ECO:0000269" key="5">
    <source>
    </source>
</evidence>
<evidence type="ECO:0000269" key="6">
    <source>
    </source>
</evidence>
<evidence type="ECO:0000269" key="7">
    <source>
    </source>
</evidence>
<evidence type="ECO:0000303" key="8">
    <source>
    </source>
</evidence>
<evidence type="ECO:0000305" key="9"/>
<evidence type="ECO:0000312" key="10">
    <source>
        <dbReference type="RGD" id="621745"/>
    </source>
</evidence>
<keyword id="KW-0025">Alternative splicing</keyword>
<keyword id="KW-0963">Cytoplasm</keyword>
<keyword id="KW-0206">Cytoskeleton</keyword>
<keyword id="KW-0903">Direct protein sequencing</keyword>
<keyword id="KW-0342">GTP-binding</keyword>
<keyword id="KW-0547">Nucleotide-binding</keyword>
<keyword id="KW-0597">Phosphoprotein</keyword>
<keyword id="KW-1185">Reference proteome</keyword>
<keyword id="KW-0770">Synapse</keyword>
<name>SEPT3_RAT</name>